<accession>P0C2U6</accession>
<comment type="function">
    <text evidence="1">Inhibits growth of Gram-positive (S.aureus, B.subtilis) and Gram-negative (E.coli, P.aeruginosa) bacteria and fungi (C.albicans).</text>
</comment>
<comment type="subcellular location">
    <subcellularLocation>
        <location>Secreted</location>
    </subcellularLocation>
</comment>
<comment type="tissue specificity">
    <text>Expressed by the venom gland.</text>
</comment>
<comment type="mass spectrometry" mass="1960.49" method="MALDI" evidence="1"/>
<comment type="similarity">
    <text>Belongs to the cationic peptide 04 (cupiennin) family. 05 subfamily.</text>
</comment>
<comment type="online information" name="The antimicrobial peptide database">
    <link uri="https://wangapd3.com/database/query_output.php?ID=01786"/>
</comment>
<name>LYC1_LYCSI</name>
<sequence length="18" mass="1961">GKLQAFLAKMKEIAAQTL</sequence>
<organism>
    <name type="scientific">Lycosa singoriensis</name>
    <name type="common">Wolf spider</name>
    <name type="synonym">Aranea singoriensis</name>
    <dbReference type="NCBI Taxonomy" id="434756"/>
    <lineage>
        <taxon>Eukaryota</taxon>
        <taxon>Metazoa</taxon>
        <taxon>Ecdysozoa</taxon>
        <taxon>Arthropoda</taxon>
        <taxon>Chelicerata</taxon>
        <taxon>Arachnida</taxon>
        <taxon>Araneae</taxon>
        <taxon>Araneomorphae</taxon>
        <taxon>Entelegynae</taxon>
        <taxon>Lycosoidea</taxon>
        <taxon>Lycosidae</taxon>
        <taxon>Lycosa</taxon>
    </lineage>
</organism>
<protein>
    <recommendedName>
        <fullName>M-lycotoxin-Ls3a</fullName>
        <shortName>M-LCTX-Ls3a</shortName>
    </recommendedName>
    <alternativeName>
        <fullName>Lycocitin-1</fullName>
    </alternativeName>
</protein>
<keyword id="KW-0027">Amidation</keyword>
<keyword id="KW-0044">Antibiotic</keyword>
<keyword id="KW-0929">Antimicrobial</keyword>
<keyword id="KW-0903">Direct protein sequencing</keyword>
<keyword id="KW-0295">Fungicide</keyword>
<keyword id="KW-0964">Secreted</keyword>
<evidence type="ECO:0000269" key="1">
    <source>
    </source>
</evidence>
<proteinExistence type="evidence at protein level"/>
<dbReference type="ArachnoServer" id="AS000751">
    <property type="toxin name" value="M-lycotoxin-Ls3a"/>
</dbReference>
<dbReference type="GO" id="GO:0005576">
    <property type="term" value="C:extracellular region"/>
    <property type="evidence" value="ECO:0007669"/>
    <property type="project" value="UniProtKB-SubCell"/>
</dbReference>
<dbReference type="GO" id="GO:0042742">
    <property type="term" value="P:defense response to bacterium"/>
    <property type="evidence" value="ECO:0007669"/>
    <property type="project" value="UniProtKB-KW"/>
</dbReference>
<dbReference type="GO" id="GO:0050832">
    <property type="term" value="P:defense response to fungus"/>
    <property type="evidence" value="ECO:0007669"/>
    <property type="project" value="UniProtKB-KW"/>
</dbReference>
<dbReference type="GO" id="GO:0031640">
    <property type="term" value="P:killing of cells of another organism"/>
    <property type="evidence" value="ECO:0007669"/>
    <property type="project" value="UniProtKB-KW"/>
</dbReference>
<reference key="1">
    <citation type="journal article" date="2004" name="J. Mass Spectrom.">
        <title>De novo sequencing of antimicrobial peptides isolated from the venom glands of the wolf spider Lycosa singoriensis.</title>
        <authorList>
            <person name="Budnik B.A."/>
            <person name="Olsen J.V."/>
            <person name="Egorov T.A."/>
            <person name="Anisimova V.E."/>
            <person name="Galkina T.G."/>
            <person name="Musolyamov A.K."/>
            <person name="Grishin E.V."/>
            <person name="Zubarev R.A."/>
        </authorList>
    </citation>
    <scope>PROTEIN SEQUENCE</scope>
    <scope>MASS SPECTROMETRY</scope>
    <scope>FUNCTION</scope>
    <scope>AMIDATION AT LEU-18</scope>
    <scope>SYNTHESIS</scope>
    <source>
        <tissue>Venom</tissue>
    </source>
</reference>
<feature type="peptide" id="PRO_0000285256" description="M-lycotoxin-Ls3a">
    <location>
        <begin position="1"/>
        <end position="18"/>
    </location>
</feature>
<feature type="modified residue" description="Leucine amide" evidence="1">
    <location>
        <position position="18"/>
    </location>
</feature>